<feature type="signal peptide" evidence="2">
    <location>
        <begin position="1"/>
        <end position="22"/>
    </location>
</feature>
<feature type="chain" id="PRO_0000371691" description="Probable pectinesterase/pectinesterase inhibitor 41">
    <location>
        <begin position="23"/>
        <end position="573"/>
    </location>
</feature>
<feature type="region of interest" description="Pectinesterase inhibitor 41">
    <location>
        <begin position="25"/>
        <end position="184"/>
    </location>
</feature>
<feature type="region of interest" description="Pectinesterase 41">
    <location>
        <begin position="259"/>
        <end position="557"/>
    </location>
</feature>
<feature type="active site" description="Proton donor; for pectinesterase activity" evidence="3">
    <location>
        <position position="389"/>
    </location>
</feature>
<feature type="active site" description="Nucleophile; for pectinesterase activity" evidence="3">
    <location>
        <position position="410"/>
    </location>
</feature>
<feature type="binding site" evidence="1">
    <location>
        <position position="336"/>
    </location>
    <ligand>
        <name>substrate</name>
        <note>for pectinesterase activity</note>
    </ligand>
</feature>
<feature type="binding site" evidence="1">
    <location>
        <position position="366"/>
    </location>
    <ligand>
        <name>substrate</name>
        <note>for pectinesterase activity</note>
    </ligand>
</feature>
<feature type="binding site" evidence="1">
    <location>
        <position position="478"/>
    </location>
    <ligand>
        <name>substrate</name>
        <note>for pectinesterase activity</note>
    </ligand>
</feature>
<feature type="binding site" evidence="1">
    <location>
        <position position="480"/>
    </location>
    <ligand>
        <name>substrate</name>
        <note>for pectinesterase activity</note>
    </ligand>
</feature>
<feature type="site" description="Transition state stabilizer" evidence="1">
    <location>
        <position position="388"/>
    </location>
</feature>
<feature type="glycosylation site" description="N-linked (GlcNAc...) asparagine" evidence="2">
    <location>
        <position position="29"/>
    </location>
</feature>
<feature type="glycosylation site" description="N-linked (GlcNAc...) asparagine" evidence="2">
    <location>
        <position position="119"/>
    </location>
</feature>
<feature type="glycosylation site" description="N-linked (GlcNAc...) asparagine" evidence="2">
    <location>
        <position position="173"/>
    </location>
</feature>
<feature type="glycosylation site" description="N-linked (GlcNAc...) asparagine" evidence="2">
    <location>
        <position position="264"/>
    </location>
</feature>
<feature type="glycosylation site" description="N-linked (GlcNAc...) asparagine" evidence="2">
    <location>
        <position position="268"/>
    </location>
</feature>
<feature type="glycosylation site" description="N-linked (GlcNAc...) asparagine" evidence="2">
    <location>
        <position position="281"/>
    </location>
</feature>
<feature type="glycosylation site" description="N-linked (GlcNAc...) asparagine" evidence="2">
    <location>
        <position position="320"/>
    </location>
</feature>
<feature type="glycosylation site" description="N-linked (GlcNAc...) asparagine" evidence="2">
    <location>
        <position position="353"/>
    </location>
</feature>
<feature type="glycosylation site" description="N-linked (GlcNAc...) asparagine" evidence="2">
    <location>
        <position position="456"/>
    </location>
</feature>
<feature type="glycosylation site" description="N-linked (GlcNAc...) asparagine" evidence="2">
    <location>
        <position position="469"/>
    </location>
</feature>
<feature type="glycosylation site" description="N-linked (GlcNAc...) asparagine" evidence="2">
    <location>
        <position position="520"/>
    </location>
</feature>
<feature type="glycosylation site" description="N-linked (GlcNAc...) asparagine" evidence="2">
    <location>
        <position position="541"/>
    </location>
</feature>
<feature type="glycosylation site" description="N-linked (GlcNAc...) asparagine" evidence="2">
    <location>
        <position position="547"/>
    </location>
</feature>
<feature type="disulfide bond" evidence="1">
    <location>
        <begin position="403"/>
        <end position="423"/>
    </location>
</feature>
<feature type="sequence conflict" description="In Ref. 3; AAL87311." evidence="6" ref="3">
    <original>P</original>
    <variation>Q</variation>
    <location>
        <position position="446"/>
    </location>
</feature>
<feature type="sequence conflict" description="In Ref. 4; AAC02974." evidence="6" ref="4">
    <original>H</original>
    <variation>Y</variation>
    <location>
        <position position="455"/>
    </location>
</feature>
<proteinExistence type="evidence at transcript level"/>
<organism>
    <name type="scientific">Arabidopsis thaliana</name>
    <name type="common">Mouse-ear cress</name>
    <dbReference type="NCBI Taxonomy" id="3702"/>
    <lineage>
        <taxon>Eukaryota</taxon>
        <taxon>Viridiplantae</taxon>
        <taxon>Streptophyta</taxon>
        <taxon>Embryophyta</taxon>
        <taxon>Tracheophyta</taxon>
        <taxon>Spermatophyta</taxon>
        <taxon>Magnoliopsida</taxon>
        <taxon>eudicotyledons</taxon>
        <taxon>Gunneridae</taxon>
        <taxon>Pentapetalae</taxon>
        <taxon>rosids</taxon>
        <taxon>malvids</taxon>
        <taxon>Brassicales</taxon>
        <taxon>Brassicaceae</taxon>
        <taxon>Camelineae</taxon>
        <taxon>Arabidopsis</taxon>
    </lineage>
</organism>
<reference key="1">
    <citation type="journal article" date="1999" name="Nature">
        <title>Sequence and analysis of chromosome 4 of the plant Arabidopsis thaliana.</title>
        <authorList>
            <person name="Mayer K.F.X."/>
            <person name="Schueller C."/>
            <person name="Wambutt R."/>
            <person name="Murphy G."/>
            <person name="Volckaert G."/>
            <person name="Pohl T."/>
            <person name="Duesterhoeft A."/>
            <person name="Stiekema W."/>
            <person name="Entian K.-D."/>
            <person name="Terryn N."/>
            <person name="Harris B."/>
            <person name="Ansorge W."/>
            <person name="Brandt P."/>
            <person name="Grivell L.A."/>
            <person name="Rieger M."/>
            <person name="Weichselgartner M."/>
            <person name="de Simone V."/>
            <person name="Obermaier B."/>
            <person name="Mache R."/>
            <person name="Mueller M."/>
            <person name="Kreis M."/>
            <person name="Delseny M."/>
            <person name="Puigdomenech P."/>
            <person name="Watson M."/>
            <person name="Schmidtheini T."/>
            <person name="Reichert B."/>
            <person name="Portetelle D."/>
            <person name="Perez-Alonso M."/>
            <person name="Boutry M."/>
            <person name="Bancroft I."/>
            <person name="Vos P."/>
            <person name="Hoheisel J."/>
            <person name="Zimmermann W."/>
            <person name="Wedler H."/>
            <person name="Ridley P."/>
            <person name="Langham S.-A."/>
            <person name="McCullagh B."/>
            <person name="Bilham L."/>
            <person name="Robben J."/>
            <person name="van der Schueren J."/>
            <person name="Grymonprez B."/>
            <person name="Chuang Y.-J."/>
            <person name="Vandenbussche F."/>
            <person name="Braeken M."/>
            <person name="Weltjens I."/>
            <person name="Voet M."/>
            <person name="Bastiaens I."/>
            <person name="Aert R."/>
            <person name="Defoor E."/>
            <person name="Weitzenegger T."/>
            <person name="Bothe G."/>
            <person name="Ramsperger U."/>
            <person name="Hilbert H."/>
            <person name="Braun M."/>
            <person name="Holzer E."/>
            <person name="Brandt A."/>
            <person name="Peters S."/>
            <person name="van Staveren M."/>
            <person name="Dirkse W."/>
            <person name="Mooijman P."/>
            <person name="Klein Lankhorst R."/>
            <person name="Rose M."/>
            <person name="Hauf J."/>
            <person name="Koetter P."/>
            <person name="Berneiser S."/>
            <person name="Hempel S."/>
            <person name="Feldpausch M."/>
            <person name="Lamberth S."/>
            <person name="Van den Daele H."/>
            <person name="De Keyser A."/>
            <person name="Buysshaert C."/>
            <person name="Gielen J."/>
            <person name="Villarroel R."/>
            <person name="De Clercq R."/>
            <person name="van Montagu M."/>
            <person name="Rogers J."/>
            <person name="Cronin A."/>
            <person name="Quail M.A."/>
            <person name="Bray-Allen S."/>
            <person name="Clark L."/>
            <person name="Doggett J."/>
            <person name="Hall S."/>
            <person name="Kay M."/>
            <person name="Lennard N."/>
            <person name="McLay K."/>
            <person name="Mayes R."/>
            <person name="Pettett A."/>
            <person name="Rajandream M.A."/>
            <person name="Lyne M."/>
            <person name="Benes V."/>
            <person name="Rechmann S."/>
            <person name="Borkova D."/>
            <person name="Bloecker H."/>
            <person name="Scharfe M."/>
            <person name="Grimm M."/>
            <person name="Loehnert T.-H."/>
            <person name="Dose S."/>
            <person name="de Haan M."/>
            <person name="Maarse A.C."/>
            <person name="Schaefer M."/>
            <person name="Mueller-Auer S."/>
            <person name="Gabel C."/>
            <person name="Fuchs M."/>
            <person name="Fartmann B."/>
            <person name="Granderath K."/>
            <person name="Dauner D."/>
            <person name="Herzl A."/>
            <person name="Neumann S."/>
            <person name="Argiriou A."/>
            <person name="Vitale D."/>
            <person name="Liguori R."/>
            <person name="Piravandi E."/>
            <person name="Massenet O."/>
            <person name="Quigley F."/>
            <person name="Clabauld G."/>
            <person name="Muendlein A."/>
            <person name="Felber R."/>
            <person name="Schnabl S."/>
            <person name="Hiller R."/>
            <person name="Schmidt W."/>
            <person name="Lecharny A."/>
            <person name="Aubourg S."/>
            <person name="Chefdor F."/>
            <person name="Cooke R."/>
            <person name="Berger C."/>
            <person name="Monfort A."/>
            <person name="Casacuberta E."/>
            <person name="Gibbons T."/>
            <person name="Weber N."/>
            <person name="Vandenbol M."/>
            <person name="Bargues M."/>
            <person name="Terol J."/>
            <person name="Torres A."/>
            <person name="Perez-Perez A."/>
            <person name="Purnelle B."/>
            <person name="Bent E."/>
            <person name="Johnson S."/>
            <person name="Tacon D."/>
            <person name="Jesse T."/>
            <person name="Heijnen L."/>
            <person name="Schwarz S."/>
            <person name="Scholler P."/>
            <person name="Heber S."/>
            <person name="Francs P."/>
            <person name="Bielke C."/>
            <person name="Frishman D."/>
            <person name="Haase D."/>
            <person name="Lemcke K."/>
            <person name="Mewes H.-W."/>
            <person name="Stocker S."/>
            <person name="Zaccaria P."/>
            <person name="Bevan M."/>
            <person name="Wilson R.K."/>
            <person name="de la Bastide M."/>
            <person name="Habermann K."/>
            <person name="Parnell L."/>
            <person name="Dedhia N."/>
            <person name="Gnoj L."/>
            <person name="Schutz K."/>
            <person name="Huang E."/>
            <person name="Spiegel L."/>
            <person name="Sekhon M."/>
            <person name="Murray J."/>
            <person name="Sheet P."/>
            <person name="Cordes M."/>
            <person name="Abu-Threideh J."/>
            <person name="Stoneking T."/>
            <person name="Kalicki J."/>
            <person name="Graves T."/>
            <person name="Harmon G."/>
            <person name="Edwards J."/>
            <person name="Latreille P."/>
            <person name="Courtney L."/>
            <person name="Cloud J."/>
            <person name="Abbott A."/>
            <person name="Scott K."/>
            <person name="Johnson D."/>
            <person name="Minx P."/>
            <person name="Bentley D."/>
            <person name="Fulton B."/>
            <person name="Miller N."/>
            <person name="Greco T."/>
            <person name="Kemp K."/>
            <person name="Kramer J."/>
            <person name="Fulton L."/>
            <person name="Mardis E."/>
            <person name="Dante M."/>
            <person name="Pepin K."/>
            <person name="Hillier L.W."/>
            <person name="Nelson J."/>
            <person name="Spieth J."/>
            <person name="Ryan E."/>
            <person name="Andrews S."/>
            <person name="Geisel C."/>
            <person name="Layman D."/>
            <person name="Du H."/>
            <person name="Ali J."/>
            <person name="Berghoff A."/>
            <person name="Jones K."/>
            <person name="Drone K."/>
            <person name="Cotton M."/>
            <person name="Joshu C."/>
            <person name="Antonoiu B."/>
            <person name="Zidanic M."/>
            <person name="Strong C."/>
            <person name="Sun H."/>
            <person name="Lamar B."/>
            <person name="Yordan C."/>
            <person name="Ma P."/>
            <person name="Zhong J."/>
            <person name="Preston R."/>
            <person name="Vil D."/>
            <person name="Shekher M."/>
            <person name="Matero A."/>
            <person name="Shah R."/>
            <person name="Swaby I.K."/>
            <person name="O'Shaughnessy A."/>
            <person name="Rodriguez M."/>
            <person name="Hoffman J."/>
            <person name="Till S."/>
            <person name="Granat S."/>
            <person name="Shohdy N."/>
            <person name="Hasegawa A."/>
            <person name="Hameed A."/>
            <person name="Lodhi M."/>
            <person name="Johnson A."/>
            <person name="Chen E."/>
            <person name="Marra M.A."/>
            <person name="Martienssen R."/>
            <person name="McCombie W.R."/>
        </authorList>
    </citation>
    <scope>NUCLEOTIDE SEQUENCE [LARGE SCALE GENOMIC DNA]</scope>
    <source>
        <strain>cv. Columbia</strain>
    </source>
</reference>
<reference key="2">
    <citation type="journal article" date="2017" name="Plant J.">
        <title>Araport11: a complete reannotation of the Arabidopsis thaliana reference genome.</title>
        <authorList>
            <person name="Cheng C.Y."/>
            <person name="Krishnakumar V."/>
            <person name="Chan A.P."/>
            <person name="Thibaud-Nissen F."/>
            <person name="Schobel S."/>
            <person name="Town C.D."/>
        </authorList>
    </citation>
    <scope>GENOME REANNOTATION</scope>
    <source>
        <strain>cv. Columbia</strain>
    </source>
</reference>
<reference key="3">
    <citation type="journal article" date="2003" name="Science">
        <title>Empirical analysis of transcriptional activity in the Arabidopsis genome.</title>
        <authorList>
            <person name="Yamada K."/>
            <person name="Lim J."/>
            <person name="Dale J.M."/>
            <person name="Chen H."/>
            <person name="Shinn P."/>
            <person name="Palm C.J."/>
            <person name="Southwick A.M."/>
            <person name="Wu H.C."/>
            <person name="Kim C.J."/>
            <person name="Nguyen M."/>
            <person name="Pham P.K."/>
            <person name="Cheuk R.F."/>
            <person name="Karlin-Newmann G."/>
            <person name="Liu S.X."/>
            <person name="Lam B."/>
            <person name="Sakano H."/>
            <person name="Wu T."/>
            <person name="Yu G."/>
            <person name="Miranda M."/>
            <person name="Quach H.L."/>
            <person name="Tripp M."/>
            <person name="Chang C.H."/>
            <person name="Lee J.M."/>
            <person name="Toriumi M.J."/>
            <person name="Chan M.M."/>
            <person name="Tang C.C."/>
            <person name="Onodera C.S."/>
            <person name="Deng J.M."/>
            <person name="Akiyama K."/>
            <person name="Ansari Y."/>
            <person name="Arakawa T."/>
            <person name="Banh J."/>
            <person name="Banno F."/>
            <person name="Bowser L."/>
            <person name="Brooks S.Y."/>
            <person name="Carninci P."/>
            <person name="Chao Q."/>
            <person name="Choy N."/>
            <person name="Enju A."/>
            <person name="Goldsmith A.D."/>
            <person name="Gurjal M."/>
            <person name="Hansen N.F."/>
            <person name="Hayashizaki Y."/>
            <person name="Johnson-Hopson C."/>
            <person name="Hsuan V.W."/>
            <person name="Iida K."/>
            <person name="Karnes M."/>
            <person name="Khan S."/>
            <person name="Koesema E."/>
            <person name="Ishida J."/>
            <person name="Jiang P.X."/>
            <person name="Jones T."/>
            <person name="Kawai J."/>
            <person name="Kamiya A."/>
            <person name="Meyers C."/>
            <person name="Nakajima M."/>
            <person name="Narusaka M."/>
            <person name="Seki M."/>
            <person name="Sakurai T."/>
            <person name="Satou M."/>
            <person name="Tamse R."/>
            <person name="Vaysberg M."/>
            <person name="Wallender E.K."/>
            <person name="Wong C."/>
            <person name="Yamamura Y."/>
            <person name="Yuan S."/>
            <person name="Shinozaki K."/>
            <person name="Davis R.W."/>
            <person name="Theologis A."/>
            <person name="Ecker J.R."/>
        </authorList>
    </citation>
    <scope>NUCLEOTIDE SEQUENCE [LARGE SCALE MRNA]</scope>
    <source>
        <strain>cv. Columbia</strain>
    </source>
</reference>
<reference key="4">
    <citation type="journal article" date="1998" name="Gene">
        <title>Characterization of the pectin methylesterase-like gene AtPME3: a new member of a gene family comprising at least 12 genes in Arabidopsis thaliana.</title>
        <authorList>
            <person name="Micheli F."/>
            <person name="Holliger C."/>
            <person name="Goldberg R."/>
            <person name="Richard L."/>
        </authorList>
    </citation>
    <scope>NUCLEOTIDE SEQUENCE [GENOMIC DNA] OF 406-484</scope>
    <scope>TISSUE SPECIFICITY</scope>
</reference>
<reference key="5">
    <citation type="journal article" date="2004" name="Carbohydr. Res.">
        <title>Pectin methylesterases: sequence-structural features and phylogenetic relationships.</title>
        <authorList>
            <person name="Markovic O."/>
            <person name="Janecek S."/>
        </authorList>
    </citation>
    <scope>GENE FAMILY</scope>
    <scope>NOMENCLATURE</scope>
</reference>
<reference key="6">
    <citation type="journal article" date="2006" name="Planta">
        <title>Comprehensive expression profiling of the pectin methylesterase gene family during silique development in Arabidopsis thaliana.</title>
        <authorList>
            <person name="Louvet R."/>
            <person name="Cavel E."/>
            <person name="Gutierrez L."/>
            <person name="Guenin S."/>
            <person name="Roger D."/>
            <person name="Gillet F."/>
            <person name="Guerineau F."/>
            <person name="Pelloux J."/>
        </authorList>
    </citation>
    <scope>TISSUE SPECIFICITY</scope>
    <scope>DEVELOPMENTAL STAGE</scope>
</reference>
<evidence type="ECO:0000250" key="1"/>
<evidence type="ECO:0000255" key="2"/>
<evidence type="ECO:0000255" key="3">
    <source>
        <dbReference type="PROSITE-ProRule" id="PRU10040"/>
    </source>
</evidence>
<evidence type="ECO:0000269" key="4">
    <source>
    </source>
</evidence>
<evidence type="ECO:0000269" key="5">
    <source>
    </source>
</evidence>
<evidence type="ECO:0000305" key="6"/>
<accession>Q8RXK7</accession>
<accession>O49008</accession>
<accession>O81300</accession>
<gene>
    <name type="primary">PME41</name>
    <name type="synonym">ARATH41</name>
    <name type="ordered locus">At4g02330</name>
    <name type="ORF">T14P8.14</name>
</gene>
<comment type="function">
    <text evidence="1">Acts in the modification of cell walls via demethylesterification of cell wall pectin.</text>
</comment>
<comment type="catalytic activity">
    <reaction>
        <text>[(1-&gt;4)-alpha-D-galacturonosyl methyl ester](n) + n H2O = [(1-&gt;4)-alpha-D-galacturonosyl](n) + n methanol + n H(+)</text>
        <dbReference type="Rhea" id="RHEA:22380"/>
        <dbReference type="Rhea" id="RHEA-COMP:14570"/>
        <dbReference type="Rhea" id="RHEA-COMP:14573"/>
        <dbReference type="ChEBI" id="CHEBI:15377"/>
        <dbReference type="ChEBI" id="CHEBI:15378"/>
        <dbReference type="ChEBI" id="CHEBI:17790"/>
        <dbReference type="ChEBI" id="CHEBI:140522"/>
        <dbReference type="ChEBI" id="CHEBI:140523"/>
        <dbReference type="EC" id="3.1.1.11"/>
    </reaction>
</comment>
<comment type="pathway">
    <text>Glycan metabolism; pectin degradation; 2-dehydro-3-deoxy-D-gluconate from pectin: step 1/5.</text>
</comment>
<comment type="subcellular location">
    <subcellularLocation>
        <location evidence="1">Secreted</location>
        <location evidence="1">Cell wall</location>
    </subcellularLocation>
</comment>
<comment type="tissue specificity">
    <text evidence="4 5">Expressed in flowers, siliques, floral stems and rosettes leaves.</text>
</comment>
<comment type="developmental stage">
    <text evidence="4">Expressed throughout silique development.</text>
</comment>
<comment type="miscellaneous">
    <text>The PMEI region may act as an autoinhibitory domain and prevent untimely PME activity during transport.</text>
</comment>
<comment type="similarity">
    <text evidence="6">In the N-terminal section; belongs to the PMEI family.</text>
</comment>
<comment type="similarity">
    <text evidence="6">In the C-terminal section; belongs to the pectinesterase family.</text>
</comment>
<name>PME41_ARATH</name>
<sequence length="573" mass="63944">MLSLKLFLVTLFLSLQTLFIASQTLLPSNSSSTICKTTPDPKFCKSVFPQTSQGDVREYGRFSLRKSLTQSRKFTRTIDRYLKRNNALLSQSAVGALQDCRYLASLTTDYLITSFETVNITTSSKTLSFSKADEIQTLLSAALTNEQTCLDGINTAASSSWTIRNGVALPLINDTKLFSVSLALFTKGWVPKKKKQVASYSWAHPKNTHSHTKPFRHFRNGALPLKMTEHTRAVYESLSRRKLADDDNDVNTVLVSDIVTVNQNGTGNFTTITEAVNSAPNKTDGTAGYFVIYVTSGVYEENVVIAKNKRYLMMIGDGINRTVVTGNRNVVDGWTTFNSATFAVTSPNFVAVNMTFRNTAGPEKHQAVAMRSSADLSIFYSCSFEAYQDTLYTHSLRQFYRECDIYGTVDFIFGNAAVVFQDCNLYPRQPMQNQFNAITAQGRTDPNQNTGISIHNCTIKPADDLVSSNYTVKTYLGRPWKEYSRTVFMQSYIDEVVEPVGWREWNGDFALSTLYYAEYNNTGSGSSTTDRVVWPGYHVINSTDANNFTVENFLLGDGWMVQSGVPYISGLLS</sequence>
<keyword id="KW-0063">Aspartyl esterase</keyword>
<keyword id="KW-0134">Cell wall</keyword>
<keyword id="KW-0961">Cell wall biogenesis/degradation</keyword>
<keyword id="KW-1015">Disulfide bond</keyword>
<keyword id="KW-0325">Glycoprotein</keyword>
<keyword id="KW-0378">Hydrolase</keyword>
<keyword id="KW-1185">Reference proteome</keyword>
<keyword id="KW-0964">Secreted</keyword>
<keyword id="KW-0732">Signal</keyword>
<protein>
    <recommendedName>
        <fullName>Probable pectinesterase/pectinesterase inhibitor 41</fullName>
    </recommendedName>
    <domain>
        <recommendedName>
            <fullName>Pectinesterase inhibitor 41</fullName>
        </recommendedName>
        <alternativeName>
            <fullName>Pectin methylesterase inhibitor 41</fullName>
        </alternativeName>
    </domain>
    <domain>
        <recommendedName>
            <fullName>Pectinesterase 41</fullName>
            <shortName>PE 41</shortName>
            <ecNumber>3.1.1.11</ecNumber>
        </recommendedName>
        <alternativeName>
            <fullName>AtPMEpcrB</fullName>
        </alternativeName>
        <alternativeName>
            <fullName>Pectin methylesterase 41</fullName>
            <shortName>AtPME41</shortName>
        </alternativeName>
    </domain>
</protein>
<dbReference type="EC" id="3.1.1.11"/>
<dbReference type="EMBL" id="AF069298">
    <property type="protein sequence ID" value="AAC19280.1"/>
    <property type="molecule type" value="Genomic_DNA"/>
</dbReference>
<dbReference type="EMBL" id="AL161494">
    <property type="protein sequence ID" value="CAB80726.1"/>
    <property type="molecule type" value="Genomic_DNA"/>
</dbReference>
<dbReference type="EMBL" id="CP002687">
    <property type="protein sequence ID" value="AEE82156.1"/>
    <property type="molecule type" value="Genomic_DNA"/>
</dbReference>
<dbReference type="EMBL" id="AY150433">
    <property type="protein sequence ID" value="AAN12975.1"/>
    <property type="molecule type" value="mRNA"/>
</dbReference>
<dbReference type="EMBL" id="AY080836">
    <property type="protein sequence ID" value="AAL87311.1"/>
    <property type="molecule type" value="mRNA"/>
</dbReference>
<dbReference type="EMBL" id="AF033206">
    <property type="protein sequence ID" value="AAC02974.1"/>
    <property type="molecule type" value="Genomic_DNA"/>
</dbReference>
<dbReference type="PIR" id="T01317">
    <property type="entry name" value="T01317"/>
</dbReference>
<dbReference type="SMR" id="Q8RXK7"/>
<dbReference type="FunCoup" id="Q8RXK7">
    <property type="interactions" value="153"/>
</dbReference>
<dbReference type="STRING" id="3702.Q8RXK7"/>
<dbReference type="GlyCosmos" id="Q8RXK7">
    <property type="glycosylation" value="13 sites, No reported glycans"/>
</dbReference>
<dbReference type="GlyGen" id="Q8RXK7">
    <property type="glycosylation" value="13 sites"/>
</dbReference>
<dbReference type="PaxDb" id="3702-AT4G02330.1"/>
<dbReference type="ProteomicsDB" id="234742"/>
<dbReference type="EnsemblPlants" id="AT4G02330.1">
    <property type="protein sequence ID" value="AT4G02330.1"/>
    <property type="gene ID" value="AT4G02330"/>
</dbReference>
<dbReference type="GeneID" id="828064"/>
<dbReference type="Gramene" id="AT4G02330.1">
    <property type="protein sequence ID" value="AT4G02330.1"/>
    <property type="gene ID" value="AT4G02330"/>
</dbReference>
<dbReference type="KEGG" id="ath:AT4G02330"/>
<dbReference type="Araport" id="AT4G02330"/>
<dbReference type="TAIR" id="AT4G02330">
    <property type="gene designation" value="ATPMEPCRB"/>
</dbReference>
<dbReference type="eggNOG" id="ENOG502QUB9">
    <property type="taxonomic scope" value="Eukaryota"/>
</dbReference>
<dbReference type="HOGENOM" id="CLU_012243_9_1_1"/>
<dbReference type="InParanoid" id="Q8RXK7"/>
<dbReference type="OMA" id="TPDPKFC"/>
<dbReference type="OrthoDB" id="2019149at2759"/>
<dbReference type="PhylomeDB" id="Q8RXK7"/>
<dbReference type="BioCyc" id="ARA:AT4G02330-MONOMER"/>
<dbReference type="UniPathway" id="UPA00545">
    <property type="reaction ID" value="UER00823"/>
</dbReference>
<dbReference type="PRO" id="PR:Q8RXK7"/>
<dbReference type="Proteomes" id="UP000006548">
    <property type="component" value="Chromosome 4"/>
</dbReference>
<dbReference type="ExpressionAtlas" id="Q8RXK7">
    <property type="expression patterns" value="baseline and differential"/>
</dbReference>
<dbReference type="GO" id="GO:0005576">
    <property type="term" value="C:extracellular region"/>
    <property type="evidence" value="ECO:0007669"/>
    <property type="project" value="UniProtKB-KW"/>
</dbReference>
<dbReference type="GO" id="GO:0004857">
    <property type="term" value="F:enzyme inhibitor activity"/>
    <property type="evidence" value="ECO:0007669"/>
    <property type="project" value="InterPro"/>
</dbReference>
<dbReference type="GO" id="GO:0030599">
    <property type="term" value="F:pectinesterase activity"/>
    <property type="evidence" value="ECO:0000315"/>
    <property type="project" value="TAIR"/>
</dbReference>
<dbReference type="GO" id="GO:0042545">
    <property type="term" value="P:cell wall modification"/>
    <property type="evidence" value="ECO:0007669"/>
    <property type="project" value="InterPro"/>
</dbReference>
<dbReference type="GO" id="GO:0050832">
    <property type="term" value="P:defense response to fungus"/>
    <property type="evidence" value="ECO:0000270"/>
    <property type="project" value="TAIR"/>
</dbReference>
<dbReference type="GO" id="GO:0045490">
    <property type="term" value="P:pectin catabolic process"/>
    <property type="evidence" value="ECO:0007669"/>
    <property type="project" value="UniProtKB-UniPathway"/>
</dbReference>
<dbReference type="GO" id="GO:0009741">
    <property type="term" value="P:response to brassinosteroid"/>
    <property type="evidence" value="ECO:0000270"/>
    <property type="project" value="TAIR"/>
</dbReference>
<dbReference type="GO" id="GO:0009409">
    <property type="term" value="P:response to cold"/>
    <property type="evidence" value="ECO:0000270"/>
    <property type="project" value="TAIR"/>
</dbReference>
<dbReference type="GO" id="GO:0009620">
    <property type="term" value="P:response to fungus"/>
    <property type="evidence" value="ECO:0000270"/>
    <property type="project" value="TAIR"/>
</dbReference>
<dbReference type="CDD" id="cd15798">
    <property type="entry name" value="PMEI-like_3"/>
    <property type="match status" value="1"/>
</dbReference>
<dbReference type="FunFam" id="1.20.140.40:FF:000004">
    <property type="entry name" value="Pectinesterase"/>
    <property type="match status" value="1"/>
</dbReference>
<dbReference type="FunFam" id="2.160.20.10:FF:000001">
    <property type="entry name" value="Pectinesterase"/>
    <property type="match status" value="1"/>
</dbReference>
<dbReference type="Gene3D" id="1.20.140.40">
    <property type="entry name" value="Invertase/pectin methylesterase inhibitor family protein"/>
    <property type="match status" value="1"/>
</dbReference>
<dbReference type="Gene3D" id="2.160.20.10">
    <property type="entry name" value="Single-stranded right-handed beta-helix, Pectin lyase-like"/>
    <property type="match status" value="1"/>
</dbReference>
<dbReference type="InterPro" id="IPR035513">
    <property type="entry name" value="Invertase/methylesterase_inhib"/>
</dbReference>
<dbReference type="InterPro" id="IPR012334">
    <property type="entry name" value="Pectin_lyas_fold"/>
</dbReference>
<dbReference type="InterPro" id="IPR011050">
    <property type="entry name" value="Pectin_lyase_fold/virulence"/>
</dbReference>
<dbReference type="InterPro" id="IPR033131">
    <property type="entry name" value="Pectinesterase_Asp_AS"/>
</dbReference>
<dbReference type="InterPro" id="IPR000070">
    <property type="entry name" value="Pectinesterase_cat"/>
</dbReference>
<dbReference type="InterPro" id="IPR006501">
    <property type="entry name" value="Pectinesterase_inhib_dom"/>
</dbReference>
<dbReference type="NCBIfam" id="TIGR01614">
    <property type="entry name" value="PME_inhib"/>
    <property type="match status" value="1"/>
</dbReference>
<dbReference type="PANTHER" id="PTHR31707">
    <property type="entry name" value="PECTINESTERASE"/>
    <property type="match status" value="1"/>
</dbReference>
<dbReference type="Pfam" id="PF01095">
    <property type="entry name" value="Pectinesterase"/>
    <property type="match status" value="1"/>
</dbReference>
<dbReference type="Pfam" id="PF04043">
    <property type="entry name" value="PMEI"/>
    <property type="match status" value="1"/>
</dbReference>
<dbReference type="SMART" id="SM00856">
    <property type="entry name" value="PMEI"/>
    <property type="match status" value="1"/>
</dbReference>
<dbReference type="SUPFAM" id="SSF51126">
    <property type="entry name" value="Pectin lyase-like"/>
    <property type="match status" value="1"/>
</dbReference>
<dbReference type="SUPFAM" id="SSF101148">
    <property type="entry name" value="Plant invertase/pectin methylesterase inhibitor"/>
    <property type="match status" value="1"/>
</dbReference>
<dbReference type="PROSITE" id="PS00503">
    <property type="entry name" value="PECTINESTERASE_2"/>
    <property type="match status" value="1"/>
</dbReference>